<protein>
    <recommendedName>
        <fullName evidence="1">Aspartyl/glutamyl-tRNA(Asn/Gln) amidotransferase subunit B</fullName>
        <shortName evidence="1">Asp/Glu-ADT subunit B</shortName>
        <ecNumber evidence="1">6.3.5.-</ecNumber>
    </recommendedName>
</protein>
<name>GATB_MYCS5</name>
<gene>
    <name evidence="1" type="primary">gatB</name>
    <name type="ordered locus">MS53_0091</name>
</gene>
<feature type="chain" id="PRO_0000241242" description="Aspartyl/glutamyl-tRNA(Asn/Gln) amidotransferase subunit B">
    <location>
        <begin position="1"/>
        <end position="473"/>
    </location>
</feature>
<accession>Q4A6V9</accession>
<comment type="function">
    <text evidence="1">Allows the formation of correctly charged Asn-tRNA(Asn) or Gln-tRNA(Gln) through the transamidation of misacylated Asp-tRNA(Asn) or Glu-tRNA(Gln) in organisms which lack either or both of asparaginyl-tRNA or glutaminyl-tRNA synthetases. The reaction takes place in the presence of glutamine and ATP through an activated phospho-Asp-tRNA(Asn) or phospho-Glu-tRNA(Gln).</text>
</comment>
<comment type="catalytic activity">
    <reaction evidence="1">
        <text>L-glutamyl-tRNA(Gln) + L-glutamine + ATP + H2O = L-glutaminyl-tRNA(Gln) + L-glutamate + ADP + phosphate + H(+)</text>
        <dbReference type="Rhea" id="RHEA:17521"/>
        <dbReference type="Rhea" id="RHEA-COMP:9681"/>
        <dbReference type="Rhea" id="RHEA-COMP:9684"/>
        <dbReference type="ChEBI" id="CHEBI:15377"/>
        <dbReference type="ChEBI" id="CHEBI:15378"/>
        <dbReference type="ChEBI" id="CHEBI:29985"/>
        <dbReference type="ChEBI" id="CHEBI:30616"/>
        <dbReference type="ChEBI" id="CHEBI:43474"/>
        <dbReference type="ChEBI" id="CHEBI:58359"/>
        <dbReference type="ChEBI" id="CHEBI:78520"/>
        <dbReference type="ChEBI" id="CHEBI:78521"/>
        <dbReference type="ChEBI" id="CHEBI:456216"/>
    </reaction>
</comment>
<comment type="catalytic activity">
    <reaction evidence="1">
        <text>L-aspartyl-tRNA(Asn) + L-glutamine + ATP + H2O = L-asparaginyl-tRNA(Asn) + L-glutamate + ADP + phosphate + 2 H(+)</text>
        <dbReference type="Rhea" id="RHEA:14513"/>
        <dbReference type="Rhea" id="RHEA-COMP:9674"/>
        <dbReference type="Rhea" id="RHEA-COMP:9677"/>
        <dbReference type="ChEBI" id="CHEBI:15377"/>
        <dbReference type="ChEBI" id="CHEBI:15378"/>
        <dbReference type="ChEBI" id="CHEBI:29985"/>
        <dbReference type="ChEBI" id="CHEBI:30616"/>
        <dbReference type="ChEBI" id="CHEBI:43474"/>
        <dbReference type="ChEBI" id="CHEBI:58359"/>
        <dbReference type="ChEBI" id="CHEBI:78515"/>
        <dbReference type="ChEBI" id="CHEBI:78516"/>
        <dbReference type="ChEBI" id="CHEBI:456216"/>
    </reaction>
</comment>
<comment type="subunit">
    <text evidence="1">Heterotrimer of A, B and C subunits.</text>
</comment>
<comment type="similarity">
    <text evidence="1">Belongs to the GatB/GatE family. GatB subfamily.</text>
</comment>
<organism>
    <name type="scientific">Mycoplasmopsis synoviae (strain 53)</name>
    <name type="common">Mycoplasma synoviae</name>
    <dbReference type="NCBI Taxonomy" id="262723"/>
    <lineage>
        <taxon>Bacteria</taxon>
        <taxon>Bacillati</taxon>
        <taxon>Mycoplasmatota</taxon>
        <taxon>Mycoplasmoidales</taxon>
        <taxon>Metamycoplasmataceae</taxon>
        <taxon>Mycoplasmopsis</taxon>
    </lineage>
</organism>
<dbReference type="EC" id="6.3.5.-" evidence="1"/>
<dbReference type="EMBL" id="AE017245">
    <property type="protein sequence ID" value="AAZ43512.1"/>
    <property type="molecule type" value="Genomic_DNA"/>
</dbReference>
<dbReference type="RefSeq" id="WP_011283255.1">
    <property type="nucleotide sequence ID" value="NC_007294.1"/>
</dbReference>
<dbReference type="SMR" id="Q4A6V9"/>
<dbReference type="STRING" id="262723.MS53_0091"/>
<dbReference type="KEGG" id="msy:MS53_0091"/>
<dbReference type="eggNOG" id="COG0064">
    <property type="taxonomic scope" value="Bacteria"/>
</dbReference>
<dbReference type="HOGENOM" id="CLU_019240_0_0_14"/>
<dbReference type="OrthoDB" id="9804078at2"/>
<dbReference type="Proteomes" id="UP000000549">
    <property type="component" value="Chromosome"/>
</dbReference>
<dbReference type="GO" id="GO:0050566">
    <property type="term" value="F:asparaginyl-tRNA synthase (glutamine-hydrolyzing) activity"/>
    <property type="evidence" value="ECO:0007669"/>
    <property type="project" value="RHEA"/>
</dbReference>
<dbReference type="GO" id="GO:0005524">
    <property type="term" value="F:ATP binding"/>
    <property type="evidence" value="ECO:0007669"/>
    <property type="project" value="UniProtKB-KW"/>
</dbReference>
<dbReference type="GO" id="GO:0050567">
    <property type="term" value="F:glutaminyl-tRNA synthase (glutamine-hydrolyzing) activity"/>
    <property type="evidence" value="ECO:0007669"/>
    <property type="project" value="UniProtKB-UniRule"/>
</dbReference>
<dbReference type="GO" id="GO:0070681">
    <property type="term" value="P:glutaminyl-tRNAGln biosynthesis via transamidation"/>
    <property type="evidence" value="ECO:0007669"/>
    <property type="project" value="TreeGrafter"/>
</dbReference>
<dbReference type="GO" id="GO:0006412">
    <property type="term" value="P:translation"/>
    <property type="evidence" value="ECO:0007669"/>
    <property type="project" value="UniProtKB-UniRule"/>
</dbReference>
<dbReference type="Gene3D" id="1.10.10.410">
    <property type="match status" value="1"/>
</dbReference>
<dbReference type="HAMAP" id="MF_00121">
    <property type="entry name" value="GatB"/>
    <property type="match status" value="1"/>
</dbReference>
<dbReference type="InterPro" id="IPR017959">
    <property type="entry name" value="Asn/Gln-tRNA_amidoTrfase_suB/E"/>
</dbReference>
<dbReference type="InterPro" id="IPR006075">
    <property type="entry name" value="Asn/Gln-tRNA_Trfase_suB/E_cat"/>
</dbReference>
<dbReference type="InterPro" id="IPR018027">
    <property type="entry name" value="Asn/Gln_amidotransferase"/>
</dbReference>
<dbReference type="InterPro" id="IPR003789">
    <property type="entry name" value="Asn/Gln_tRNA_amidoTrase-B-like"/>
</dbReference>
<dbReference type="InterPro" id="IPR004413">
    <property type="entry name" value="GatB"/>
</dbReference>
<dbReference type="InterPro" id="IPR023168">
    <property type="entry name" value="GatB_Yqey_C_2"/>
</dbReference>
<dbReference type="InterPro" id="IPR017958">
    <property type="entry name" value="Gln-tRNA_amidoTrfase_suB_CS"/>
</dbReference>
<dbReference type="InterPro" id="IPR014746">
    <property type="entry name" value="Gln_synth/guanido_kin_cat_dom"/>
</dbReference>
<dbReference type="NCBIfam" id="TIGR00133">
    <property type="entry name" value="gatB"/>
    <property type="match status" value="1"/>
</dbReference>
<dbReference type="NCBIfam" id="NF004012">
    <property type="entry name" value="PRK05477.1-2"/>
    <property type="match status" value="1"/>
</dbReference>
<dbReference type="NCBIfam" id="NF004014">
    <property type="entry name" value="PRK05477.1-4"/>
    <property type="match status" value="1"/>
</dbReference>
<dbReference type="PANTHER" id="PTHR11659">
    <property type="entry name" value="GLUTAMYL-TRNA GLN AMIDOTRANSFERASE SUBUNIT B MITOCHONDRIAL AND PROKARYOTIC PET112-RELATED"/>
    <property type="match status" value="1"/>
</dbReference>
<dbReference type="PANTHER" id="PTHR11659:SF0">
    <property type="entry name" value="GLUTAMYL-TRNA(GLN) AMIDOTRANSFERASE SUBUNIT B, MITOCHONDRIAL"/>
    <property type="match status" value="1"/>
</dbReference>
<dbReference type="Pfam" id="PF02934">
    <property type="entry name" value="GatB_N"/>
    <property type="match status" value="1"/>
</dbReference>
<dbReference type="Pfam" id="PF02637">
    <property type="entry name" value="GatB_Yqey"/>
    <property type="match status" value="1"/>
</dbReference>
<dbReference type="SMART" id="SM00845">
    <property type="entry name" value="GatB_Yqey"/>
    <property type="match status" value="1"/>
</dbReference>
<dbReference type="SUPFAM" id="SSF89095">
    <property type="entry name" value="GatB/YqeY motif"/>
    <property type="match status" value="1"/>
</dbReference>
<dbReference type="SUPFAM" id="SSF55931">
    <property type="entry name" value="Glutamine synthetase/guanido kinase"/>
    <property type="match status" value="1"/>
</dbReference>
<dbReference type="PROSITE" id="PS01234">
    <property type="entry name" value="GATB"/>
    <property type="match status" value="1"/>
</dbReference>
<keyword id="KW-0067">ATP-binding</keyword>
<keyword id="KW-0436">Ligase</keyword>
<keyword id="KW-0547">Nucleotide-binding</keyword>
<keyword id="KW-0648">Protein biosynthesis</keyword>
<keyword id="KW-1185">Reference proteome</keyword>
<sequence>MINFETVIGIEIHIELKTKTKMFSPVEINFNAESNTKANQIDLGYPGTLPQVNKKAVKYAIMLAKALNMQIDSNLRFDRKHYFYPDLPKGYQITQFYHPIGREGQIKLNNNGKEFEVNIERIHLEEDTARQHHKDNYSQLDYNRAGIPLIEIVTHPVLRSSDEACLYVDAIRKVVQTLEISEGRLEIGSLRADINISIRPLGSKSFSNKVEIKNLNSLKNIKLAIEEEIALQRAKFFANEEVLQQTKKIDEKTLKLQVLRTKTSTIDYRYFPEPNIPFIKLSKKFISSVKLKELPWEKEARYKSYNLNSIYLNSLLDDIHLANYFDSISYPDKDKLSKIFFAEVVSLANSKEMKAYHLNIDPENITKAINLLDEEVISGKSLKKLIPLLVNFKSDIKKLVKQNSLEQISDPNLISNIIKEIIKTNSELVKEYPTRQEKVLKFVLGKLMKDTGGQVNPTVANEIAIKSLDEVFK</sequence>
<proteinExistence type="inferred from homology"/>
<reference key="1">
    <citation type="journal article" date="2005" name="J. Bacteriol.">
        <title>Swine and poultry pathogens: the complete genome sequences of two strains of Mycoplasma hyopneumoniae and a strain of Mycoplasma synoviae.</title>
        <authorList>
            <person name="Vasconcelos A.T.R."/>
            <person name="Ferreira H.B."/>
            <person name="Bizarro C.V."/>
            <person name="Bonatto S.L."/>
            <person name="Carvalho M.O."/>
            <person name="Pinto P.M."/>
            <person name="Almeida D.F."/>
            <person name="Almeida L.G.P."/>
            <person name="Almeida R."/>
            <person name="Alves-Junior L."/>
            <person name="Assuncao E.N."/>
            <person name="Azevedo V.A.C."/>
            <person name="Bogo M.R."/>
            <person name="Brigido M.M."/>
            <person name="Brocchi M."/>
            <person name="Burity H.A."/>
            <person name="Camargo A.A."/>
            <person name="Camargo S.S."/>
            <person name="Carepo M.S."/>
            <person name="Carraro D.M."/>
            <person name="de Mattos Cascardo J.C."/>
            <person name="Castro L.A."/>
            <person name="Cavalcanti G."/>
            <person name="Chemale G."/>
            <person name="Collevatti R.G."/>
            <person name="Cunha C.W."/>
            <person name="Dallagiovanna B."/>
            <person name="Dambros B.P."/>
            <person name="Dellagostin O.A."/>
            <person name="Falcao C."/>
            <person name="Fantinatti-Garboggini F."/>
            <person name="Felipe M.S.S."/>
            <person name="Fiorentin L."/>
            <person name="Franco G.R."/>
            <person name="Freitas N.S.A."/>
            <person name="Frias D."/>
            <person name="Grangeiro T.B."/>
            <person name="Grisard E.C."/>
            <person name="Guimaraes C.T."/>
            <person name="Hungria M."/>
            <person name="Jardim S.N."/>
            <person name="Krieger M.A."/>
            <person name="Laurino J.P."/>
            <person name="Lima L.F.A."/>
            <person name="Lopes M.I."/>
            <person name="Loreto E.L.S."/>
            <person name="Madeira H.M.F."/>
            <person name="Manfio G.P."/>
            <person name="Maranhao A.Q."/>
            <person name="Martinkovics C.T."/>
            <person name="Medeiros S.R.B."/>
            <person name="Moreira M.A.M."/>
            <person name="Neiva M."/>
            <person name="Ramalho-Neto C.E."/>
            <person name="Nicolas M.F."/>
            <person name="Oliveira S.C."/>
            <person name="Paixao R.F.C."/>
            <person name="Pedrosa F.O."/>
            <person name="Pena S.D.J."/>
            <person name="Pereira M."/>
            <person name="Pereira-Ferrari L."/>
            <person name="Piffer I."/>
            <person name="Pinto L.S."/>
            <person name="Potrich D.P."/>
            <person name="Salim A.C.M."/>
            <person name="Santos F.R."/>
            <person name="Schmitt R."/>
            <person name="Schneider M.P.C."/>
            <person name="Schrank A."/>
            <person name="Schrank I.S."/>
            <person name="Schuck A.F."/>
            <person name="Seuanez H.N."/>
            <person name="Silva D.W."/>
            <person name="Silva R."/>
            <person name="Silva S.C."/>
            <person name="Soares C.M.A."/>
            <person name="Souza K.R.L."/>
            <person name="Souza R.C."/>
            <person name="Staats C.C."/>
            <person name="Steffens M.B.R."/>
            <person name="Teixeira S.M.R."/>
            <person name="Urmenyi T.P."/>
            <person name="Vainstein M.H."/>
            <person name="Zuccherato L.W."/>
            <person name="Simpson A.J.G."/>
            <person name="Zaha A."/>
        </authorList>
    </citation>
    <scope>NUCLEOTIDE SEQUENCE [LARGE SCALE GENOMIC DNA]</scope>
    <source>
        <strain>53</strain>
    </source>
</reference>
<evidence type="ECO:0000255" key="1">
    <source>
        <dbReference type="HAMAP-Rule" id="MF_00121"/>
    </source>
</evidence>